<protein>
    <recommendedName>
        <fullName evidence="1">Cell division topological specificity factor</fullName>
    </recommendedName>
</protein>
<dbReference type="EMBL" id="CP001158">
    <property type="protein sequence ID" value="ACL30132.1"/>
    <property type="molecule type" value="Genomic_DNA"/>
</dbReference>
<dbReference type="RefSeq" id="WP_010896068.1">
    <property type="nucleotide sequence ID" value="NC_011834.1"/>
</dbReference>
<dbReference type="SMR" id="B8D7L7"/>
<dbReference type="KEGG" id="bau:BUAPTUC7_319"/>
<dbReference type="HOGENOM" id="CLU_137929_2_2_6"/>
<dbReference type="GO" id="GO:0051301">
    <property type="term" value="P:cell division"/>
    <property type="evidence" value="ECO:0007669"/>
    <property type="project" value="UniProtKB-KW"/>
</dbReference>
<dbReference type="GO" id="GO:0032955">
    <property type="term" value="P:regulation of division septum assembly"/>
    <property type="evidence" value="ECO:0007669"/>
    <property type="project" value="InterPro"/>
</dbReference>
<dbReference type="FunFam" id="3.30.1070.10:FF:000001">
    <property type="entry name" value="Cell division topological specificity factor"/>
    <property type="match status" value="1"/>
</dbReference>
<dbReference type="Gene3D" id="3.30.1070.10">
    <property type="entry name" value="Cell division topological specificity factor MinE"/>
    <property type="match status" value="1"/>
</dbReference>
<dbReference type="HAMAP" id="MF_00262">
    <property type="entry name" value="MinE"/>
    <property type="match status" value="1"/>
</dbReference>
<dbReference type="InterPro" id="IPR005527">
    <property type="entry name" value="MinE"/>
</dbReference>
<dbReference type="InterPro" id="IPR036707">
    <property type="entry name" value="MinE_sf"/>
</dbReference>
<dbReference type="NCBIfam" id="TIGR01215">
    <property type="entry name" value="minE"/>
    <property type="match status" value="1"/>
</dbReference>
<dbReference type="NCBIfam" id="NF001422">
    <property type="entry name" value="PRK00296.1"/>
    <property type="match status" value="1"/>
</dbReference>
<dbReference type="Pfam" id="PF03776">
    <property type="entry name" value="MinE"/>
    <property type="match status" value="1"/>
</dbReference>
<dbReference type="SUPFAM" id="SSF55229">
    <property type="entry name" value="Cell division protein MinE topological specificity domain"/>
    <property type="match status" value="1"/>
</dbReference>
<keyword id="KW-0131">Cell cycle</keyword>
<keyword id="KW-0132">Cell division</keyword>
<gene>
    <name evidence="1" type="primary">minE</name>
    <name type="ordered locus">BUAPTUC7_319</name>
</gene>
<organism>
    <name type="scientific">Buchnera aphidicola subsp. Acyrthosiphon pisum (strain Tuc7)</name>
    <dbReference type="NCBI Taxonomy" id="561501"/>
    <lineage>
        <taxon>Bacteria</taxon>
        <taxon>Pseudomonadati</taxon>
        <taxon>Pseudomonadota</taxon>
        <taxon>Gammaproteobacteria</taxon>
        <taxon>Enterobacterales</taxon>
        <taxon>Erwiniaceae</taxon>
        <taxon>Buchnera</taxon>
    </lineage>
</organism>
<comment type="function">
    <text evidence="1">Prevents the cell division inhibition by proteins MinC and MinD at internal division sites while permitting inhibition at polar sites. This ensures cell division at the proper site by restricting the formation of a division septum at the midpoint of the long axis of the cell.</text>
</comment>
<comment type="similarity">
    <text evidence="1">Belongs to the MinE family.</text>
</comment>
<sequence length="83" mass="9736">MALLDFFLSRNKNTANVAKERLQIIVAEQRKYNNEPDYFPQLKREILSVICKYVNIEPNMVTVQLDQKNEDISILELNIILPD</sequence>
<reference key="1">
    <citation type="journal article" date="2009" name="Science">
        <title>The dynamics and time scale of ongoing genomic erosion in symbiotic bacteria.</title>
        <authorList>
            <person name="Moran N.A."/>
            <person name="McLaughlin H.J."/>
            <person name="Sorek R."/>
        </authorList>
    </citation>
    <scope>NUCLEOTIDE SEQUENCE [LARGE SCALE GENOMIC DNA]</scope>
    <source>
        <strain>Tuc7</strain>
    </source>
</reference>
<proteinExistence type="inferred from homology"/>
<feature type="chain" id="PRO_1000191270" description="Cell division topological specificity factor">
    <location>
        <begin position="1"/>
        <end position="83"/>
    </location>
</feature>
<evidence type="ECO:0000255" key="1">
    <source>
        <dbReference type="HAMAP-Rule" id="MF_00262"/>
    </source>
</evidence>
<name>MINE_BUCAT</name>
<accession>B8D7L7</accession>